<protein>
    <recommendedName>
        <fullName evidence="1">Ribosome-binding factor A</fullName>
    </recommendedName>
</protein>
<sequence length="128" mass="15077">MKKLTKTNSHRQQKLASIINEVLIEILKRGKMLDKRLFDCPLTITKIIVTADLKIANCYFFPFNTKLTFDEIMDALNNSKHAIRNFITNRINMKFSPEIRFYYDYGFDNAIKIEELLKNSSFKDKTSE</sequence>
<proteinExistence type="inferred from homology"/>
<gene>
    <name evidence="1" type="primary">rbfA</name>
    <name type="ordered locus">RP435</name>
</gene>
<dbReference type="EMBL" id="Y11777">
    <property type="protein sequence ID" value="CAA72443.1"/>
    <property type="molecule type" value="Genomic_DNA"/>
</dbReference>
<dbReference type="EMBL" id="AJ235271">
    <property type="protein sequence ID" value="CAA14892.1"/>
    <property type="molecule type" value="Genomic_DNA"/>
</dbReference>
<dbReference type="PIR" id="B71702">
    <property type="entry name" value="B71702"/>
</dbReference>
<dbReference type="RefSeq" id="NP_220816.1">
    <property type="nucleotide sequence ID" value="NC_000963.1"/>
</dbReference>
<dbReference type="RefSeq" id="WP_004597648.1">
    <property type="nucleotide sequence ID" value="NC_000963.1"/>
</dbReference>
<dbReference type="SMR" id="O05964"/>
<dbReference type="STRING" id="272947.gene:17555515"/>
<dbReference type="EnsemblBacteria" id="CAA14892">
    <property type="protein sequence ID" value="CAA14892"/>
    <property type="gene ID" value="CAA14892"/>
</dbReference>
<dbReference type="GeneID" id="57569560"/>
<dbReference type="KEGG" id="rpr:RP435"/>
<dbReference type="PATRIC" id="fig|272947.5.peg.448"/>
<dbReference type="eggNOG" id="COG0858">
    <property type="taxonomic scope" value="Bacteria"/>
</dbReference>
<dbReference type="HOGENOM" id="CLU_089475_1_0_5"/>
<dbReference type="OrthoDB" id="9805051at2"/>
<dbReference type="Proteomes" id="UP000002480">
    <property type="component" value="Chromosome"/>
</dbReference>
<dbReference type="GO" id="GO:0005829">
    <property type="term" value="C:cytosol"/>
    <property type="evidence" value="ECO:0007669"/>
    <property type="project" value="TreeGrafter"/>
</dbReference>
<dbReference type="GO" id="GO:0043024">
    <property type="term" value="F:ribosomal small subunit binding"/>
    <property type="evidence" value="ECO:0007669"/>
    <property type="project" value="TreeGrafter"/>
</dbReference>
<dbReference type="GO" id="GO:0030490">
    <property type="term" value="P:maturation of SSU-rRNA"/>
    <property type="evidence" value="ECO:0007669"/>
    <property type="project" value="UniProtKB-UniRule"/>
</dbReference>
<dbReference type="Gene3D" id="3.30.300.20">
    <property type="match status" value="1"/>
</dbReference>
<dbReference type="HAMAP" id="MF_00003">
    <property type="entry name" value="RbfA"/>
    <property type="match status" value="1"/>
</dbReference>
<dbReference type="InterPro" id="IPR015946">
    <property type="entry name" value="KH_dom-like_a/b"/>
</dbReference>
<dbReference type="InterPro" id="IPR000238">
    <property type="entry name" value="RbfA"/>
</dbReference>
<dbReference type="InterPro" id="IPR023799">
    <property type="entry name" value="RbfA_dom_sf"/>
</dbReference>
<dbReference type="InterPro" id="IPR020053">
    <property type="entry name" value="Ribosome-bd_factorA_CS"/>
</dbReference>
<dbReference type="NCBIfam" id="NF001799">
    <property type="entry name" value="PRK00521.2-2"/>
    <property type="match status" value="1"/>
</dbReference>
<dbReference type="NCBIfam" id="TIGR00082">
    <property type="entry name" value="rbfA"/>
    <property type="match status" value="1"/>
</dbReference>
<dbReference type="PANTHER" id="PTHR33515">
    <property type="entry name" value="RIBOSOME-BINDING FACTOR A, CHLOROPLASTIC-RELATED"/>
    <property type="match status" value="1"/>
</dbReference>
<dbReference type="PANTHER" id="PTHR33515:SF1">
    <property type="entry name" value="RIBOSOME-BINDING FACTOR A, CHLOROPLASTIC-RELATED"/>
    <property type="match status" value="1"/>
</dbReference>
<dbReference type="Pfam" id="PF02033">
    <property type="entry name" value="RBFA"/>
    <property type="match status" value="1"/>
</dbReference>
<dbReference type="SUPFAM" id="SSF89919">
    <property type="entry name" value="Ribosome-binding factor A, RbfA"/>
    <property type="match status" value="1"/>
</dbReference>
<dbReference type="PROSITE" id="PS01319">
    <property type="entry name" value="RBFA"/>
    <property type="match status" value="1"/>
</dbReference>
<evidence type="ECO:0000255" key="1">
    <source>
        <dbReference type="HAMAP-Rule" id="MF_00003"/>
    </source>
</evidence>
<feature type="chain" id="PRO_0000102722" description="Ribosome-binding factor A">
    <location>
        <begin position="1"/>
        <end position="128"/>
    </location>
</feature>
<keyword id="KW-0963">Cytoplasm</keyword>
<keyword id="KW-1185">Reference proteome</keyword>
<keyword id="KW-0690">Ribosome biogenesis</keyword>
<accession>O05964</accession>
<reference key="1">
    <citation type="journal article" date="1997" name="Microbiology">
        <title>Genomic rearrangements during evolution of the obligate intracellular parasite Rickettsia prowazekii as inferred from an analysis of 52015 bp nucleotide sequence.</title>
        <authorList>
            <person name="Andersson J.O."/>
            <person name="Andersson S.G.E."/>
        </authorList>
    </citation>
    <scope>NUCLEOTIDE SEQUENCE [GENOMIC DNA]</scope>
    <source>
        <strain>Madrid E</strain>
    </source>
</reference>
<reference key="2">
    <citation type="journal article" date="1998" name="Nature">
        <title>The genome sequence of Rickettsia prowazekii and the origin of mitochondria.</title>
        <authorList>
            <person name="Andersson S.G.E."/>
            <person name="Zomorodipour A."/>
            <person name="Andersson J.O."/>
            <person name="Sicheritz-Ponten T."/>
            <person name="Alsmark U.C.M."/>
            <person name="Podowski R.M."/>
            <person name="Naeslund A.K."/>
            <person name="Eriksson A.-S."/>
            <person name="Winkler H.H."/>
            <person name="Kurland C.G."/>
        </authorList>
    </citation>
    <scope>NUCLEOTIDE SEQUENCE [LARGE SCALE GENOMIC DNA]</scope>
    <source>
        <strain>Madrid E</strain>
    </source>
</reference>
<name>RBFA_RICPR</name>
<organism>
    <name type="scientific">Rickettsia prowazekii (strain Madrid E)</name>
    <dbReference type="NCBI Taxonomy" id="272947"/>
    <lineage>
        <taxon>Bacteria</taxon>
        <taxon>Pseudomonadati</taxon>
        <taxon>Pseudomonadota</taxon>
        <taxon>Alphaproteobacteria</taxon>
        <taxon>Rickettsiales</taxon>
        <taxon>Rickettsiaceae</taxon>
        <taxon>Rickettsieae</taxon>
        <taxon>Rickettsia</taxon>
        <taxon>typhus group</taxon>
    </lineage>
</organism>
<comment type="function">
    <text evidence="1">One of several proteins that assist in the late maturation steps of the functional core of the 30S ribosomal subunit. Associates with free 30S ribosomal subunits (but not with 30S subunits that are part of 70S ribosomes or polysomes). Required for efficient processing of 16S rRNA. May interact with the 5'-terminal helix region of 16S rRNA.</text>
</comment>
<comment type="subunit">
    <text evidence="1">Monomer. Binds 30S ribosomal subunits, but not 50S ribosomal subunits or 70S ribosomes.</text>
</comment>
<comment type="subcellular location">
    <subcellularLocation>
        <location evidence="1">Cytoplasm</location>
    </subcellularLocation>
</comment>
<comment type="similarity">
    <text evidence="1">Belongs to the RbfA family.</text>
</comment>